<gene>
    <name evidence="1" type="primary">rpsI</name>
    <name type="ordered locus">NMB2056</name>
</gene>
<keyword id="KW-1185">Reference proteome</keyword>
<keyword id="KW-0687">Ribonucleoprotein</keyword>
<keyword id="KW-0689">Ribosomal protein</keyword>
<evidence type="ECO:0000255" key="1">
    <source>
        <dbReference type="HAMAP-Rule" id="MF_00532"/>
    </source>
</evidence>
<evidence type="ECO:0000305" key="2"/>
<name>RS9_NEIMB</name>
<reference key="1">
    <citation type="journal article" date="2000" name="Science">
        <title>Complete genome sequence of Neisseria meningitidis serogroup B strain MC58.</title>
        <authorList>
            <person name="Tettelin H."/>
            <person name="Saunders N.J."/>
            <person name="Heidelberg J.F."/>
            <person name="Jeffries A.C."/>
            <person name="Nelson K.E."/>
            <person name="Eisen J.A."/>
            <person name="Ketchum K.A."/>
            <person name="Hood D.W."/>
            <person name="Peden J.F."/>
            <person name="Dodson R.J."/>
            <person name="Nelson W.C."/>
            <person name="Gwinn M.L."/>
            <person name="DeBoy R.T."/>
            <person name="Peterson J.D."/>
            <person name="Hickey E.K."/>
            <person name="Haft D.H."/>
            <person name="Salzberg S.L."/>
            <person name="White O."/>
            <person name="Fleischmann R.D."/>
            <person name="Dougherty B.A."/>
            <person name="Mason T.M."/>
            <person name="Ciecko A."/>
            <person name="Parksey D.S."/>
            <person name="Blair E."/>
            <person name="Cittone H."/>
            <person name="Clark E.B."/>
            <person name="Cotton M.D."/>
            <person name="Utterback T.R."/>
            <person name="Khouri H.M."/>
            <person name="Qin H."/>
            <person name="Vamathevan J.J."/>
            <person name="Gill J."/>
            <person name="Scarlato V."/>
            <person name="Masignani V."/>
            <person name="Pizza M."/>
            <person name="Grandi G."/>
            <person name="Sun L."/>
            <person name="Smith H.O."/>
            <person name="Fraser C.M."/>
            <person name="Moxon E.R."/>
            <person name="Rappuoli R."/>
            <person name="Venter J.C."/>
        </authorList>
    </citation>
    <scope>NUCLEOTIDE SEQUENCE [LARGE SCALE GENOMIC DNA]</scope>
    <source>
        <strain>ATCC BAA-335 / MC58</strain>
    </source>
</reference>
<dbReference type="EMBL" id="AE002098">
    <property type="protein sequence ID" value="AAF42376.1"/>
    <property type="molecule type" value="Genomic_DNA"/>
</dbReference>
<dbReference type="PIR" id="A81012">
    <property type="entry name" value="A81012"/>
</dbReference>
<dbReference type="RefSeq" id="NP_275046.1">
    <property type="nucleotide sequence ID" value="NC_003112.2"/>
</dbReference>
<dbReference type="RefSeq" id="WP_002215008.1">
    <property type="nucleotide sequence ID" value="NC_003112.2"/>
</dbReference>
<dbReference type="SMR" id="P66642"/>
<dbReference type="FunCoup" id="P66642">
    <property type="interactions" value="653"/>
</dbReference>
<dbReference type="STRING" id="122586.NMB2056"/>
<dbReference type="PaxDb" id="122586-NMB2056"/>
<dbReference type="GeneID" id="93386983"/>
<dbReference type="KEGG" id="nme:NMB2056"/>
<dbReference type="PATRIC" id="fig|122586.8.peg.2634"/>
<dbReference type="HOGENOM" id="CLU_046483_2_1_4"/>
<dbReference type="InParanoid" id="P66642"/>
<dbReference type="OrthoDB" id="9803965at2"/>
<dbReference type="Proteomes" id="UP000000425">
    <property type="component" value="Chromosome"/>
</dbReference>
<dbReference type="GO" id="GO:0022627">
    <property type="term" value="C:cytosolic small ribosomal subunit"/>
    <property type="evidence" value="ECO:0000318"/>
    <property type="project" value="GO_Central"/>
</dbReference>
<dbReference type="GO" id="GO:0003723">
    <property type="term" value="F:RNA binding"/>
    <property type="evidence" value="ECO:0000318"/>
    <property type="project" value="GO_Central"/>
</dbReference>
<dbReference type="GO" id="GO:0003735">
    <property type="term" value="F:structural constituent of ribosome"/>
    <property type="evidence" value="ECO:0000318"/>
    <property type="project" value="GO_Central"/>
</dbReference>
<dbReference type="GO" id="GO:0006412">
    <property type="term" value="P:translation"/>
    <property type="evidence" value="ECO:0007669"/>
    <property type="project" value="UniProtKB-UniRule"/>
</dbReference>
<dbReference type="FunFam" id="3.30.230.10:FF:000001">
    <property type="entry name" value="30S ribosomal protein S9"/>
    <property type="match status" value="1"/>
</dbReference>
<dbReference type="Gene3D" id="3.30.230.10">
    <property type="match status" value="1"/>
</dbReference>
<dbReference type="HAMAP" id="MF_00532_B">
    <property type="entry name" value="Ribosomal_uS9_B"/>
    <property type="match status" value="1"/>
</dbReference>
<dbReference type="InterPro" id="IPR020568">
    <property type="entry name" value="Ribosomal_Su5_D2-typ_SF"/>
</dbReference>
<dbReference type="InterPro" id="IPR000754">
    <property type="entry name" value="Ribosomal_uS9"/>
</dbReference>
<dbReference type="InterPro" id="IPR023035">
    <property type="entry name" value="Ribosomal_uS9_bac/plastid"/>
</dbReference>
<dbReference type="InterPro" id="IPR020574">
    <property type="entry name" value="Ribosomal_uS9_CS"/>
</dbReference>
<dbReference type="InterPro" id="IPR014721">
    <property type="entry name" value="Ribsml_uS5_D2-typ_fold_subgr"/>
</dbReference>
<dbReference type="NCBIfam" id="NF001099">
    <property type="entry name" value="PRK00132.1"/>
    <property type="match status" value="1"/>
</dbReference>
<dbReference type="PANTHER" id="PTHR21569">
    <property type="entry name" value="RIBOSOMAL PROTEIN S9"/>
    <property type="match status" value="1"/>
</dbReference>
<dbReference type="PANTHER" id="PTHR21569:SF1">
    <property type="entry name" value="SMALL RIBOSOMAL SUBUNIT PROTEIN US9M"/>
    <property type="match status" value="1"/>
</dbReference>
<dbReference type="Pfam" id="PF00380">
    <property type="entry name" value="Ribosomal_S9"/>
    <property type="match status" value="1"/>
</dbReference>
<dbReference type="SUPFAM" id="SSF54211">
    <property type="entry name" value="Ribosomal protein S5 domain 2-like"/>
    <property type="match status" value="1"/>
</dbReference>
<dbReference type="PROSITE" id="PS00360">
    <property type="entry name" value="RIBOSOMAL_S9"/>
    <property type="match status" value="1"/>
</dbReference>
<sequence>MNGKYYYGTGRRKSSVARVFLIKGTGQIIVNGRPVDEFFARETSRMVVRQPLVLTENAESFDIKVNVVGGGETGQSGAIRHGITRALIDFDAALKPALSQAGFVTRDAREVERKKPGLRKARRAKQFSKR</sequence>
<organism>
    <name type="scientific">Neisseria meningitidis serogroup B (strain ATCC BAA-335 / MC58)</name>
    <dbReference type="NCBI Taxonomy" id="122586"/>
    <lineage>
        <taxon>Bacteria</taxon>
        <taxon>Pseudomonadati</taxon>
        <taxon>Pseudomonadota</taxon>
        <taxon>Betaproteobacteria</taxon>
        <taxon>Neisseriales</taxon>
        <taxon>Neisseriaceae</taxon>
        <taxon>Neisseria</taxon>
    </lineage>
</organism>
<feature type="chain" id="PRO_0000111382" description="Small ribosomal subunit protein uS9">
    <location>
        <begin position="1"/>
        <end position="130"/>
    </location>
</feature>
<proteinExistence type="inferred from homology"/>
<comment type="similarity">
    <text evidence="1">Belongs to the universal ribosomal protein uS9 family.</text>
</comment>
<protein>
    <recommendedName>
        <fullName evidence="1">Small ribosomal subunit protein uS9</fullName>
    </recommendedName>
    <alternativeName>
        <fullName evidence="2">30S ribosomal protein S9</fullName>
    </alternativeName>
</protein>
<accession>P66642</accession>
<accession>Q9JQZ9</accession>